<keyword id="KW-0066">ATP synthesis</keyword>
<keyword id="KW-0067">ATP-binding</keyword>
<keyword id="KW-0997">Cell inner membrane</keyword>
<keyword id="KW-1003">Cell membrane</keyword>
<keyword id="KW-0139">CF(1)</keyword>
<keyword id="KW-0375">Hydrogen ion transport</keyword>
<keyword id="KW-0406">Ion transport</keyword>
<keyword id="KW-0472">Membrane</keyword>
<keyword id="KW-0547">Nucleotide-binding</keyword>
<keyword id="KW-1278">Translocase</keyword>
<keyword id="KW-0813">Transport</keyword>
<name>ATPB2_BURP6</name>
<evidence type="ECO:0000255" key="1">
    <source>
        <dbReference type="HAMAP-Rule" id="MF_01347"/>
    </source>
</evidence>
<evidence type="ECO:0000256" key="2">
    <source>
        <dbReference type="SAM" id="MobiDB-lite"/>
    </source>
</evidence>
<feature type="chain" id="PRO_0000339497" description="ATP synthase subunit beta 2">
    <location>
        <begin position="1"/>
        <end position="534"/>
    </location>
</feature>
<feature type="region of interest" description="Disordered" evidence="2">
    <location>
        <begin position="1"/>
        <end position="30"/>
    </location>
</feature>
<feature type="region of interest" description="Disordered" evidence="2">
    <location>
        <begin position="494"/>
        <end position="534"/>
    </location>
</feature>
<feature type="compositionally biased region" description="Polar residues" evidence="2">
    <location>
        <begin position="1"/>
        <end position="10"/>
    </location>
</feature>
<feature type="compositionally biased region" description="Basic and acidic residues" evidence="2">
    <location>
        <begin position="494"/>
        <end position="505"/>
    </location>
</feature>
<feature type="binding site" evidence="1">
    <location>
        <begin position="185"/>
        <end position="192"/>
    </location>
    <ligand>
        <name>ATP</name>
        <dbReference type="ChEBI" id="CHEBI:30616"/>
    </ligand>
</feature>
<accession>A3NN65</accession>
<dbReference type="EC" id="7.1.2.2" evidence="1"/>
<dbReference type="EMBL" id="CP000571">
    <property type="protein sequence ID" value="ABN85700.1"/>
    <property type="molecule type" value="Genomic_DNA"/>
</dbReference>
<dbReference type="SMR" id="A3NN65"/>
<dbReference type="KEGG" id="bpd:BURPS668_A2794"/>
<dbReference type="HOGENOM" id="CLU_022398_0_2_4"/>
<dbReference type="GO" id="GO:0005886">
    <property type="term" value="C:plasma membrane"/>
    <property type="evidence" value="ECO:0007669"/>
    <property type="project" value="UniProtKB-SubCell"/>
</dbReference>
<dbReference type="GO" id="GO:0045259">
    <property type="term" value="C:proton-transporting ATP synthase complex"/>
    <property type="evidence" value="ECO:0007669"/>
    <property type="project" value="UniProtKB-KW"/>
</dbReference>
<dbReference type="GO" id="GO:0005524">
    <property type="term" value="F:ATP binding"/>
    <property type="evidence" value="ECO:0007669"/>
    <property type="project" value="UniProtKB-UniRule"/>
</dbReference>
<dbReference type="GO" id="GO:0016887">
    <property type="term" value="F:ATP hydrolysis activity"/>
    <property type="evidence" value="ECO:0007669"/>
    <property type="project" value="InterPro"/>
</dbReference>
<dbReference type="GO" id="GO:0046933">
    <property type="term" value="F:proton-transporting ATP synthase activity, rotational mechanism"/>
    <property type="evidence" value="ECO:0007669"/>
    <property type="project" value="UniProtKB-UniRule"/>
</dbReference>
<dbReference type="CDD" id="cd18110">
    <property type="entry name" value="ATP-synt_F1_beta_C"/>
    <property type="match status" value="1"/>
</dbReference>
<dbReference type="CDD" id="cd01133">
    <property type="entry name" value="F1-ATPase_beta_CD"/>
    <property type="match status" value="1"/>
</dbReference>
<dbReference type="Gene3D" id="2.40.10.170">
    <property type="match status" value="1"/>
</dbReference>
<dbReference type="Gene3D" id="1.10.1140.10">
    <property type="entry name" value="Bovine Mitochondrial F1-atpase, Atp Synthase Beta Chain, Chain D, domain 3"/>
    <property type="match status" value="1"/>
</dbReference>
<dbReference type="Gene3D" id="3.40.50.300">
    <property type="entry name" value="P-loop containing nucleotide triphosphate hydrolases"/>
    <property type="match status" value="1"/>
</dbReference>
<dbReference type="HAMAP" id="MF_01347">
    <property type="entry name" value="ATP_synth_beta_bact"/>
    <property type="match status" value="1"/>
</dbReference>
<dbReference type="InterPro" id="IPR003593">
    <property type="entry name" value="AAA+_ATPase"/>
</dbReference>
<dbReference type="InterPro" id="IPR055190">
    <property type="entry name" value="ATP-synt_VA_C"/>
</dbReference>
<dbReference type="InterPro" id="IPR005722">
    <property type="entry name" value="ATP_synth_F1_bsu"/>
</dbReference>
<dbReference type="InterPro" id="IPR020003">
    <property type="entry name" value="ATPase_a/bsu_AS"/>
</dbReference>
<dbReference type="InterPro" id="IPR050053">
    <property type="entry name" value="ATPase_alpha/beta_chains"/>
</dbReference>
<dbReference type="InterPro" id="IPR004100">
    <property type="entry name" value="ATPase_F1/V1/A1_a/bsu_N"/>
</dbReference>
<dbReference type="InterPro" id="IPR036121">
    <property type="entry name" value="ATPase_F1/V1/A1_a/bsu_N_sf"/>
</dbReference>
<dbReference type="InterPro" id="IPR000194">
    <property type="entry name" value="ATPase_F1/V1/A1_a/bsu_nucl-bd"/>
</dbReference>
<dbReference type="InterPro" id="IPR024034">
    <property type="entry name" value="ATPase_F1/V1_b/a_C"/>
</dbReference>
<dbReference type="InterPro" id="IPR027417">
    <property type="entry name" value="P-loop_NTPase"/>
</dbReference>
<dbReference type="NCBIfam" id="TIGR01039">
    <property type="entry name" value="atpD"/>
    <property type="match status" value="1"/>
</dbReference>
<dbReference type="PANTHER" id="PTHR15184">
    <property type="entry name" value="ATP SYNTHASE"/>
    <property type="match status" value="1"/>
</dbReference>
<dbReference type="PANTHER" id="PTHR15184:SF71">
    <property type="entry name" value="ATP SYNTHASE SUBUNIT BETA, MITOCHONDRIAL"/>
    <property type="match status" value="1"/>
</dbReference>
<dbReference type="Pfam" id="PF00006">
    <property type="entry name" value="ATP-synt_ab"/>
    <property type="match status" value="1"/>
</dbReference>
<dbReference type="Pfam" id="PF02874">
    <property type="entry name" value="ATP-synt_ab_N"/>
    <property type="match status" value="1"/>
</dbReference>
<dbReference type="Pfam" id="PF22919">
    <property type="entry name" value="ATP-synt_VA_C"/>
    <property type="match status" value="1"/>
</dbReference>
<dbReference type="SMART" id="SM00382">
    <property type="entry name" value="AAA"/>
    <property type="match status" value="1"/>
</dbReference>
<dbReference type="SUPFAM" id="SSF47917">
    <property type="entry name" value="C-terminal domain of alpha and beta subunits of F1 ATP synthase"/>
    <property type="match status" value="1"/>
</dbReference>
<dbReference type="SUPFAM" id="SSF50615">
    <property type="entry name" value="N-terminal domain of alpha and beta subunits of F1 ATP synthase"/>
    <property type="match status" value="1"/>
</dbReference>
<dbReference type="SUPFAM" id="SSF52540">
    <property type="entry name" value="P-loop containing nucleoside triphosphate hydrolases"/>
    <property type="match status" value="1"/>
</dbReference>
<dbReference type="PROSITE" id="PS00152">
    <property type="entry name" value="ATPASE_ALPHA_BETA"/>
    <property type="match status" value="1"/>
</dbReference>
<proteinExistence type="inferred from homology"/>
<protein>
    <recommendedName>
        <fullName evidence="1">ATP synthase subunit beta 2</fullName>
        <ecNumber evidence="1">7.1.2.2</ecNumber>
    </recommendedName>
    <alternativeName>
        <fullName evidence="1">ATP synthase F1 sector subunit beta 2</fullName>
    </alternativeName>
    <alternativeName>
        <fullName evidence="1">F-ATPase subunit beta 2</fullName>
    </alternativeName>
</protein>
<gene>
    <name evidence="1" type="primary">atpD2</name>
    <name type="ordered locus">BURPS668_A2794</name>
</gene>
<sequence>MADPQATNGTGAACAERDASDVGDVSDVGDARDEGAGRVVAVRGAVVDVAFDGGALPALNEALTIPVDGAAPILAEVHAHLSDAAVRALALGPTGGLRRGAAVRATGGPIRVPVGDAVLGRLLSVTGAPGDDGAALAADVERRPIHRGAPPLAEQKSANALFATGIKVIDLLAPLAQGGKAAMFGGAGVGKTVLVMELIHAMVERYRGISVFAGIGERSREGHEMLLDMRGSGVLGRTVLVYGQMNEPPGARWRVPLTALAIAEYFRDERAQNVLLLMDNVFRFVQAGAEVSGLLGRLPSRVGYQPTLASEVAALQERIASVEGAAVTAIEAVYVPADDFTDPAVTAIAAHVDSMVVLSRAMAAEGMYPAIDPVASSSILLDPLVVGEAHVEVAIEVRRVIEHYRELQDVIALLGIDELGADDRRLVGRARRLQRFLTQPFAVTEAFTGQAGASVEIADTIAGCRAILRGDCDDWRESSLYMVGTLDDARRKEAAAREADARREAAAAASGAGPGTTSDPASGSAEPQGARHGR</sequence>
<comment type="function">
    <text evidence="1">Produces ATP from ADP in the presence of a proton gradient across the membrane. The catalytic sites are hosted primarily by the beta subunits.</text>
</comment>
<comment type="catalytic activity">
    <reaction evidence="1">
        <text>ATP + H2O + 4 H(+)(in) = ADP + phosphate + 5 H(+)(out)</text>
        <dbReference type="Rhea" id="RHEA:57720"/>
        <dbReference type="ChEBI" id="CHEBI:15377"/>
        <dbReference type="ChEBI" id="CHEBI:15378"/>
        <dbReference type="ChEBI" id="CHEBI:30616"/>
        <dbReference type="ChEBI" id="CHEBI:43474"/>
        <dbReference type="ChEBI" id="CHEBI:456216"/>
        <dbReference type="EC" id="7.1.2.2"/>
    </reaction>
</comment>
<comment type="subunit">
    <text evidence="1">F-type ATPases have 2 components, CF(1) - the catalytic core - and CF(0) - the membrane proton channel. CF(1) has five subunits: alpha(3), beta(3), gamma(1), delta(1), epsilon(1). CF(0) has three main subunits: a(1), b(2) and c(9-12). The alpha and beta chains form an alternating ring which encloses part of the gamma chain. CF(1) is attached to CF(0) by a central stalk formed by the gamma and epsilon chains, while a peripheral stalk is formed by the delta and b chains.</text>
</comment>
<comment type="subcellular location">
    <subcellularLocation>
        <location evidence="1">Cell inner membrane</location>
        <topology evidence="1">Peripheral membrane protein</topology>
    </subcellularLocation>
</comment>
<comment type="similarity">
    <text evidence="1">Belongs to the ATPase alpha/beta chains family.</text>
</comment>
<organism>
    <name type="scientific">Burkholderia pseudomallei (strain 668)</name>
    <dbReference type="NCBI Taxonomy" id="320373"/>
    <lineage>
        <taxon>Bacteria</taxon>
        <taxon>Pseudomonadati</taxon>
        <taxon>Pseudomonadota</taxon>
        <taxon>Betaproteobacteria</taxon>
        <taxon>Burkholderiales</taxon>
        <taxon>Burkholderiaceae</taxon>
        <taxon>Burkholderia</taxon>
        <taxon>pseudomallei group</taxon>
    </lineage>
</organism>
<reference key="1">
    <citation type="journal article" date="2010" name="Genome Biol. Evol.">
        <title>Continuing evolution of Burkholderia mallei through genome reduction and large-scale rearrangements.</title>
        <authorList>
            <person name="Losada L."/>
            <person name="Ronning C.M."/>
            <person name="DeShazer D."/>
            <person name="Woods D."/>
            <person name="Fedorova N."/>
            <person name="Kim H.S."/>
            <person name="Shabalina S.A."/>
            <person name="Pearson T.R."/>
            <person name="Brinkac L."/>
            <person name="Tan P."/>
            <person name="Nandi T."/>
            <person name="Crabtree J."/>
            <person name="Badger J."/>
            <person name="Beckstrom-Sternberg S."/>
            <person name="Saqib M."/>
            <person name="Schutzer S.E."/>
            <person name="Keim P."/>
            <person name="Nierman W.C."/>
        </authorList>
    </citation>
    <scope>NUCLEOTIDE SEQUENCE [LARGE SCALE GENOMIC DNA]</scope>
    <source>
        <strain>668</strain>
    </source>
</reference>